<gene>
    <name evidence="1" type="primary">chbG</name>
    <name type="ordered locus">EcHS_A1815</name>
</gene>
<dbReference type="EC" id="3.5.1.105" evidence="1"/>
<dbReference type="EMBL" id="CP000802">
    <property type="protein sequence ID" value="ABV06129.1"/>
    <property type="molecule type" value="Genomic_DNA"/>
</dbReference>
<dbReference type="RefSeq" id="WP_000440458.1">
    <property type="nucleotide sequence ID" value="NC_009800.1"/>
</dbReference>
<dbReference type="SMR" id="A8A0S5"/>
<dbReference type="KEGG" id="ecx:EcHS_A1815"/>
<dbReference type="HOGENOM" id="CLU_064244_4_1_6"/>
<dbReference type="UniPathway" id="UPA00349"/>
<dbReference type="GO" id="GO:0005737">
    <property type="term" value="C:cytoplasm"/>
    <property type="evidence" value="ECO:0007669"/>
    <property type="project" value="UniProtKB-SubCell"/>
</dbReference>
<dbReference type="GO" id="GO:0036311">
    <property type="term" value="F:chitin disaccharide deacetylase activity"/>
    <property type="evidence" value="ECO:0007669"/>
    <property type="project" value="UniProtKB-UniRule"/>
</dbReference>
<dbReference type="GO" id="GO:0019213">
    <property type="term" value="F:deacetylase activity"/>
    <property type="evidence" value="ECO:0007669"/>
    <property type="project" value="TreeGrafter"/>
</dbReference>
<dbReference type="GO" id="GO:0046872">
    <property type="term" value="F:metal ion binding"/>
    <property type="evidence" value="ECO:0007669"/>
    <property type="project" value="UniProtKB-KW"/>
</dbReference>
<dbReference type="GO" id="GO:0006032">
    <property type="term" value="P:chitin catabolic process"/>
    <property type="evidence" value="ECO:0007669"/>
    <property type="project" value="UniProtKB-UniPathway"/>
</dbReference>
<dbReference type="GO" id="GO:0052777">
    <property type="term" value="P:diacetylchitobiose catabolic process"/>
    <property type="evidence" value="ECO:0007669"/>
    <property type="project" value="UniProtKB-UniRule"/>
</dbReference>
<dbReference type="GO" id="GO:0000272">
    <property type="term" value="P:polysaccharide catabolic process"/>
    <property type="evidence" value="ECO:0007669"/>
    <property type="project" value="UniProtKB-UniRule"/>
</dbReference>
<dbReference type="CDD" id="cd10803">
    <property type="entry name" value="YdjC_EF3048_like"/>
    <property type="match status" value="1"/>
</dbReference>
<dbReference type="FunFam" id="3.20.20.370:FF:000001">
    <property type="entry name" value="Chitooligosaccharide deacetylase"/>
    <property type="match status" value="1"/>
</dbReference>
<dbReference type="Gene3D" id="3.20.20.370">
    <property type="entry name" value="Glycoside hydrolase/deacetylase"/>
    <property type="match status" value="1"/>
</dbReference>
<dbReference type="HAMAP" id="MF_01246">
    <property type="entry name" value="COD"/>
    <property type="match status" value="1"/>
</dbReference>
<dbReference type="InterPro" id="IPR022948">
    <property type="entry name" value="COD_ChbG_bac"/>
</dbReference>
<dbReference type="InterPro" id="IPR011330">
    <property type="entry name" value="Glyco_hydro/deAcase_b/a-brl"/>
</dbReference>
<dbReference type="InterPro" id="IPR006879">
    <property type="entry name" value="YdjC-like"/>
</dbReference>
<dbReference type="NCBIfam" id="NF002559">
    <property type="entry name" value="PRK02134.1"/>
    <property type="match status" value="1"/>
</dbReference>
<dbReference type="PANTHER" id="PTHR31609:SF1">
    <property type="entry name" value="CARBOHYDRATE DEACETYLASE"/>
    <property type="match status" value="1"/>
</dbReference>
<dbReference type="PANTHER" id="PTHR31609">
    <property type="entry name" value="YDJC DEACETYLASE FAMILY MEMBER"/>
    <property type="match status" value="1"/>
</dbReference>
<dbReference type="Pfam" id="PF04794">
    <property type="entry name" value="YdjC"/>
    <property type="match status" value="1"/>
</dbReference>
<dbReference type="SUPFAM" id="SSF88713">
    <property type="entry name" value="Glycoside hydrolase/deacetylase"/>
    <property type="match status" value="1"/>
</dbReference>
<reference key="1">
    <citation type="journal article" date="2008" name="J. Bacteriol.">
        <title>The pangenome structure of Escherichia coli: comparative genomic analysis of E. coli commensal and pathogenic isolates.</title>
        <authorList>
            <person name="Rasko D.A."/>
            <person name="Rosovitz M.J."/>
            <person name="Myers G.S.A."/>
            <person name="Mongodin E.F."/>
            <person name="Fricke W.F."/>
            <person name="Gajer P."/>
            <person name="Crabtree J."/>
            <person name="Sebaihia M."/>
            <person name="Thomson N.R."/>
            <person name="Chaudhuri R."/>
            <person name="Henderson I.R."/>
            <person name="Sperandio V."/>
            <person name="Ravel J."/>
        </authorList>
    </citation>
    <scope>NUCLEOTIDE SEQUENCE [LARGE SCALE GENOMIC DNA]</scope>
    <source>
        <strain>HS</strain>
    </source>
</reference>
<evidence type="ECO:0000255" key="1">
    <source>
        <dbReference type="HAMAP-Rule" id="MF_01246"/>
    </source>
</evidence>
<comment type="function">
    <text evidence="1">Involved in the degradation of chitin. ChbG is essential for growth on the acetylated chitooligosaccharides chitobiose and chitotriose but is dispensable for growth on cellobiose and chitosan dimer, the deacetylated form of chitobiose. Deacetylation of chitobiose-6-P and chitotriose-6-P is necessary for both the activation of the chb promoter by the regulatory protein ChbR and the hydrolysis of phosphorylated beta-glucosides by the phospho-beta-glucosidase ChbF. Catalyzes the removal of only one acetyl group from chitobiose-6-P to yield monoacetylchitobiose-6-P, the inducer of ChbR and the substrate of ChbF.</text>
</comment>
<comment type="catalytic activity">
    <reaction evidence="1">
        <text>N,N'-diacetylchitobiose + H2O = N-acetyl-beta-D-glucosaminyl-(1-&gt;4)-D-glucosamine + acetate</text>
        <dbReference type="Rhea" id="RHEA:27469"/>
        <dbReference type="ChEBI" id="CHEBI:15377"/>
        <dbReference type="ChEBI" id="CHEBI:28681"/>
        <dbReference type="ChEBI" id="CHEBI:30089"/>
        <dbReference type="ChEBI" id="CHEBI:59910"/>
        <dbReference type="EC" id="3.5.1.105"/>
    </reaction>
</comment>
<comment type="catalytic activity">
    <reaction evidence="1">
        <text>diacetylchitobiose-6'-phosphate + H2O = N'-monoacetylchitobiose-6'-phosphate + acetate</text>
        <dbReference type="Rhea" id="RHEA:35083"/>
        <dbReference type="ChEBI" id="CHEBI:15377"/>
        <dbReference type="ChEBI" id="CHEBI:30089"/>
        <dbReference type="ChEBI" id="CHEBI:64883"/>
        <dbReference type="ChEBI" id="CHEBI:71315"/>
    </reaction>
</comment>
<comment type="cofactor">
    <cofactor evidence="1">
        <name>Mg(2+)</name>
        <dbReference type="ChEBI" id="CHEBI:18420"/>
    </cofactor>
</comment>
<comment type="pathway">
    <text evidence="1">Glycan degradation; chitin degradation.</text>
</comment>
<comment type="subunit">
    <text evidence="1">Homodimer.</text>
</comment>
<comment type="subcellular location">
    <subcellularLocation>
        <location evidence="1">Cytoplasm</location>
    </subcellularLocation>
</comment>
<comment type="similarity">
    <text evidence="1">Belongs to the YdjC deacetylase family. ChbG subfamily.</text>
</comment>
<proteinExistence type="inferred from homology"/>
<sequence length="249" mass="27746">MERLLIVNADDFGLSKGQNYGIIEACRNGIVTSTTALVNGQAIDHAVQLSRDEPSLAIGMHFVLTMGKPLTAMPGLTRDGVLGKWIWQLAEEDALPLEEITQELASQYLRFIELFGRKPTHLDSHHHVHMFPQIFPIVARFAAEQGIALRADRQMAFDLPVNLRTTQGFSSAFYGEEISESLFLQVLDDAGHRGDRSLEVMCHPAFIDNTIRQSAYCFPRLTELDVLTSASLKGAIAQRGYRLGSYRDV</sequence>
<protein>
    <recommendedName>
        <fullName evidence="1">Chitooligosaccharide deacetylase</fullName>
        <shortName evidence="1">COD</shortName>
        <ecNumber evidence="1">3.5.1.105</ecNumber>
    </recommendedName>
    <alternativeName>
        <fullName evidence="1">Chitin disaccharide deacetylase</fullName>
    </alternativeName>
    <alternativeName>
        <fullName evidence="1">Chitobiose deacetylase</fullName>
    </alternativeName>
    <alternativeName>
        <fullName evidence="1">Chitobiose-6P deacetylase</fullName>
    </alternativeName>
    <alternativeName>
        <fullName evidence="1">Chitotriose deacetylase</fullName>
    </alternativeName>
    <alternativeName>
        <fullName evidence="1">Chitotriose-6P deacetylase</fullName>
    </alternativeName>
</protein>
<organism>
    <name type="scientific">Escherichia coli O9:H4 (strain HS)</name>
    <dbReference type="NCBI Taxonomy" id="331112"/>
    <lineage>
        <taxon>Bacteria</taxon>
        <taxon>Pseudomonadati</taxon>
        <taxon>Pseudomonadota</taxon>
        <taxon>Gammaproteobacteria</taxon>
        <taxon>Enterobacterales</taxon>
        <taxon>Enterobacteriaceae</taxon>
        <taxon>Escherichia</taxon>
    </lineage>
</organism>
<name>CHBG_ECOHS</name>
<feature type="chain" id="PRO_1000067079" description="Chitooligosaccharide deacetylase">
    <location>
        <begin position="1"/>
        <end position="249"/>
    </location>
</feature>
<feature type="binding site" evidence="1">
    <location>
        <position position="61"/>
    </location>
    <ligand>
        <name>Mg(2+)</name>
        <dbReference type="ChEBI" id="CHEBI:18420"/>
    </ligand>
</feature>
<feature type="binding site" evidence="1">
    <location>
        <position position="125"/>
    </location>
    <ligand>
        <name>Mg(2+)</name>
        <dbReference type="ChEBI" id="CHEBI:18420"/>
    </ligand>
</feature>
<keyword id="KW-0119">Carbohydrate metabolism</keyword>
<keyword id="KW-0146">Chitin degradation</keyword>
<keyword id="KW-0963">Cytoplasm</keyword>
<keyword id="KW-0378">Hydrolase</keyword>
<keyword id="KW-0460">Magnesium</keyword>
<keyword id="KW-0479">Metal-binding</keyword>
<keyword id="KW-0624">Polysaccharide degradation</keyword>
<accession>A8A0S5</accession>